<gene>
    <name evidence="1" type="primary">pnp</name>
    <name type="ordered locus">Dalk_4743</name>
</gene>
<name>PNP_DESAL</name>
<organism>
    <name type="scientific">Desulfatibacillum aliphaticivorans</name>
    <dbReference type="NCBI Taxonomy" id="218208"/>
    <lineage>
        <taxon>Bacteria</taxon>
        <taxon>Pseudomonadati</taxon>
        <taxon>Thermodesulfobacteriota</taxon>
        <taxon>Desulfobacteria</taxon>
        <taxon>Desulfobacterales</taxon>
        <taxon>Desulfatibacillaceae</taxon>
        <taxon>Desulfatibacillum</taxon>
    </lineage>
</organism>
<keyword id="KW-0963">Cytoplasm</keyword>
<keyword id="KW-0460">Magnesium</keyword>
<keyword id="KW-0479">Metal-binding</keyword>
<keyword id="KW-0548">Nucleotidyltransferase</keyword>
<keyword id="KW-1185">Reference proteome</keyword>
<keyword id="KW-0694">RNA-binding</keyword>
<keyword id="KW-0808">Transferase</keyword>
<sequence>MEVTLERNLGDKPLRIQTGKLAKQASGSVVVSYGETITLVTVVGSQELRPGIDFVPLSVEYQEKVYAAGRIPGNYFRREIGRPSEKETLTARLIDRPIRPLFPKTWRYETQVIATVLSMDQENDPDMLSMVGASAALCISDLPFFTPIACVRVGRIDGELVANPTISQQENCDLNIIVAGSRDGVVMVEGGGQFISEEEMLDAIYFGQESLEPLLEMQEELMEKAGVPKRSADPVEKDEYLAAKVAELADPEIKKALEINDKLERQDAIRDVKKTVMEGLGEEYEDRGKEVSEFIHDRTRVIMRAMVLDEGRRIGGRRFDEVRPITCEVGILPRTHGSALFTRGETQSLGILTLGSSGDEQRVETLYGDETRPFMLHYNFPPYSVREVKRISGPSRRDIGHGGLSTRAIKEVLPSKEDFDYTIRIVSEILESNGSSSMATVCSASLALMDGGVPITNPVSGIAMGLMAEGDKIVVLSDILGDEDHMGDMDFKVAGTKDGITSVQMDIKISSLTREIMEKALAQARVGRLHILEKMLTTISESREEMSPYAPKVFTIQIHPDKIRDIIGPGGKVIRAIQAETGTRVDVDDSGLVKVSAVNLEEGEAALQMIKDITAVPEVGAVYEGTVVKIMDFGAFVAILPGTEGLCHISQLDTKHVKKVSDVVKEGEKIKVKVLELTKDGKIRLSRKALLEEENGKSGPENGAPQRDKNRH</sequence>
<evidence type="ECO:0000255" key="1">
    <source>
        <dbReference type="HAMAP-Rule" id="MF_01595"/>
    </source>
</evidence>
<evidence type="ECO:0000256" key="2">
    <source>
        <dbReference type="SAM" id="MobiDB-lite"/>
    </source>
</evidence>
<feature type="chain" id="PRO_0000381882" description="Polyribonucleotide nucleotidyltransferase">
    <location>
        <begin position="1"/>
        <end position="712"/>
    </location>
</feature>
<feature type="domain" description="KH" evidence="1">
    <location>
        <begin position="551"/>
        <end position="610"/>
    </location>
</feature>
<feature type="domain" description="S1 motif" evidence="1">
    <location>
        <begin position="620"/>
        <end position="688"/>
    </location>
</feature>
<feature type="region of interest" description="Disordered" evidence="2">
    <location>
        <begin position="689"/>
        <end position="712"/>
    </location>
</feature>
<feature type="binding site" evidence="1">
    <location>
        <position position="484"/>
    </location>
    <ligand>
        <name>Mg(2+)</name>
        <dbReference type="ChEBI" id="CHEBI:18420"/>
    </ligand>
</feature>
<feature type="binding site" evidence="1">
    <location>
        <position position="490"/>
    </location>
    <ligand>
        <name>Mg(2+)</name>
        <dbReference type="ChEBI" id="CHEBI:18420"/>
    </ligand>
</feature>
<dbReference type="EC" id="2.7.7.8" evidence="1"/>
<dbReference type="EMBL" id="CP001322">
    <property type="protein sequence ID" value="ACL06421.1"/>
    <property type="molecule type" value="Genomic_DNA"/>
</dbReference>
<dbReference type="RefSeq" id="WP_015949460.1">
    <property type="nucleotide sequence ID" value="NC_011768.1"/>
</dbReference>
<dbReference type="SMR" id="B8FCZ0"/>
<dbReference type="KEGG" id="dal:Dalk_4743"/>
<dbReference type="eggNOG" id="COG1185">
    <property type="taxonomic scope" value="Bacteria"/>
</dbReference>
<dbReference type="HOGENOM" id="CLU_004217_2_2_7"/>
<dbReference type="Proteomes" id="UP000000739">
    <property type="component" value="Chromosome"/>
</dbReference>
<dbReference type="GO" id="GO:0005829">
    <property type="term" value="C:cytosol"/>
    <property type="evidence" value="ECO:0007669"/>
    <property type="project" value="TreeGrafter"/>
</dbReference>
<dbReference type="GO" id="GO:0000175">
    <property type="term" value="F:3'-5'-RNA exonuclease activity"/>
    <property type="evidence" value="ECO:0007669"/>
    <property type="project" value="TreeGrafter"/>
</dbReference>
<dbReference type="GO" id="GO:0000287">
    <property type="term" value="F:magnesium ion binding"/>
    <property type="evidence" value="ECO:0007669"/>
    <property type="project" value="UniProtKB-UniRule"/>
</dbReference>
<dbReference type="GO" id="GO:0004654">
    <property type="term" value="F:polyribonucleotide nucleotidyltransferase activity"/>
    <property type="evidence" value="ECO:0007669"/>
    <property type="project" value="UniProtKB-UniRule"/>
</dbReference>
<dbReference type="GO" id="GO:0003723">
    <property type="term" value="F:RNA binding"/>
    <property type="evidence" value="ECO:0007669"/>
    <property type="project" value="UniProtKB-UniRule"/>
</dbReference>
<dbReference type="GO" id="GO:0006402">
    <property type="term" value="P:mRNA catabolic process"/>
    <property type="evidence" value="ECO:0007669"/>
    <property type="project" value="UniProtKB-UniRule"/>
</dbReference>
<dbReference type="GO" id="GO:0006396">
    <property type="term" value="P:RNA processing"/>
    <property type="evidence" value="ECO:0007669"/>
    <property type="project" value="InterPro"/>
</dbReference>
<dbReference type="CDD" id="cd02393">
    <property type="entry name" value="KH-I_PNPase"/>
    <property type="match status" value="1"/>
</dbReference>
<dbReference type="CDD" id="cd11363">
    <property type="entry name" value="RNase_PH_PNPase_1"/>
    <property type="match status" value="1"/>
</dbReference>
<dbReference type="CDD" id="cd11364">
    <property type="entry name" value="RNase_PH_PNPase_2"/>
    <property type="match status" value="1"/>
</dbReference>
<dbReference type="CDD" id="cd04472">
    <property type="entry name" value="S1_PNPase"/>
    <property type="match status" value="1"/>
</dbReference>
<dbReference type="FunFam" id="2.40.50.140:FF:000023">
    <property type="entry name" value="Polyribonucleotide nucleotidyltransferase"/>
    <property type="match status" value="1"/>
</dbReference>
<dbReference type="FunFam" id="3.30.1370.10:FF:000001">
    <property type="entry name" value="Polyribonucleotide nucleotidyltransferase"/>
    <property type="match status" value="1"/>
</dbReference>
<dbReference type="FunFam" id="3.30.230.70:FF:000001">
    <property type="entry name" value="Polyribonucleotide nucleotidyltransferase"/>
    <property type="match status" value="1"/>
</dbReference>
<dbReference type="FunFam" id="3.30.230.70:FF:000002">
    <property type="entry name" value="Polyribonucleotide nucleotidyltransferase"/>
    <property type="match status" value="1"/>
</dbReference>
<dbReference type="Gene3D" id="3.30.230.70">
    <property type="entry name" value="GHMP Kinase, N-terminal domain"/>
    <property type="match status" value="2"/>
</dbReference>
<dbReference type="Gene3D" id="3.30.1370.10">
    <property type="entry name" value="K Homology domain, type 1"/>
    <property type="match status" value="1"/>
</dbReference>
<dbReference type="Gene3D" id="2.40.50.140">
    <property type="entry name" value="Nucleic acid-binding proteins"/>
    <property type="match status" value="1"/>
</dbReference>
<dbReference type="HAMAP" id="MF_01595">
    <property type="entry name" value="PNPase"/>
    <property type="match status" value="1"/>
</dbReference>
<dbReference type="InterPro" id="IPR001247">
    <property type="entry name" value="ExoRNase_PH_dom1"/>
</dbReference>
<dbReference type="InterPro" id="IPR015847">
    <property type="entry name" value="ExoRNase_PH_dom2"/>
</dbReference>
<dbReference type="InterPro" id="IPR036345">
    <property type="entry name" value="ExoRNase_PH_dom2_sf"/>
</dbReference>
<dbReference type="InterPro" id="IPR004087">
    <property type="entry name" value="KH_dom"/>
</dbReference>
<dbReference type="InterPro" id="IPR004088">
    <property type="entry name" value="KH_dom_type_1"/>
</dbReference>
<dbReference type="InterPro" id="IPR036612">
    <property type="entry name" value="KH_dom_type_1_sf"/>
</dbReference>
<dbReference type="InterPro" id="IPR012340">
    <property type="entry name" value="NA-bd_OB-fold"/>
</dbReference>
<dbReference type="InterPro" id="IPR012162">
    <property type="entry name" value="PNPase"/>
</dbReference>
<dbReference type="InterPro" id="IPR027408">
    <property type="entry name" value="PNPase/RNase_PH_dom_sf"/>
</dbReference>
<dbReference type="InterPro" id="IPR015848">
    <property type="entry name" value="PNPase_PH_RNA-bd_bac/org-type"/>
</dbReference>
<dbReference type="InterPro" id="IPR036456">
    <property type="entry name" value="PNPase_PH_RNA-bd_sf"/>
</dbReference>
<dbReference type="InterPro" id="IPR020568">
    <property type="entry name" value="Ribosomal_Su5_D2-typ_SF"/>
</dbReference>
<dbReference type="InterPro" id="IPR003029">
    <property type="entry name" value="S1_domain"/>
</dbReference>
<dbReference type="NCBIfam" id="TIGR03591">
    <property type="entry name" value="polynuc_phos"/>
    <property type="match status" value="1"/>
</dbReference>
<dbReference type="NCBIfam" id="NF008805">
    <property type="entry name" value="PRK11824.1"/>
    <property type="match status" value="1"/>
</dbReference>
<dbReference type="PANTHER" id="PTHR11252">
    <property type="entry name" value="POLYRIBONUCLEOTIDE NUCLEOTIDYLTRANSFERASE"/>
    <property type="match status" value="1"/>
</dbReference>
<dbReference type="PANTHER" id="PTHR11252:SF0">
    <property type="entry name" value="POLYRIBONUCLEOTIDE NUCLEOTIDYLTRANSFERASE 1, MITOCHONDRIAL"/>
    <property type="match status" value="1"/>
</dbReference>
<dbReference type="Pfam" id="PF00013">
    <property type="entry name" value="KH_1"/>
    <property type="match status" value="1"/>
</dbReference>
<dbReference type="Pfam" id="PF03726">
    <property type="entry name" value="PNPase"/>
    <property type="match status" value="1"/>
</dbReference>
<dbReference type="Pfam" id="PF01138">
    <property type="entry name" value="RNase_PH"/>
    <property type="match status" value="2"/>
</dbReference>
<dbReference type="Pfam" id="PF03725">
    <property type="entry name" value="RNase_PH_C"/>
    <property type="match status" value="2"/>
</dbReference>
<dbReference type="Pfam" id="PF00575">
    <property type="entry name" value="S1"/>
    <property type="match status" value="1"/>
</dbReference>
<dbReference type="PIRSF" id="PIRSF005499">
    <property type="entry name" value="PNPase"/>
    <property type="match status" value="1"/>
</dbReference>
<dbReference type="SMART" id="SM00322">
    <property type="entry name" value="KH"/>
    <property type="match status" value="1"/>
</dbReference>
<dbReference type="SMART" id="SM00316">
    <property type="entry name" value="S1"/>
    <property type="match status" value="1"/>
</dbReference>
<dbReference type="SUPFAM" id="SSF54791">
    <property type="entry name" value="Eukaryotic type KH-domain (KH-domain type I)"/>
    <property type="match status" value="1"/>
</dbReference>
<dbReference type="SUPFAM" id="SSF50249">
    <property type="entry name" value="Nucleic acid-binding proteins"/>
    <property type="match status" value="1"/>
</dbReference>
<dbReference type="SUPFAM" id="SSF46915">
    <property type="entry name" value="Polynucleotide phosphorylase/guanosine pentaphosphate synthase (PNPase/GPSI), domain 3"/>
    <property type="match status" value="1"/>
</dbReference>
<dbReference type="SUPFAM" id="SSF55666">
    <property type="entry name" value="Ribonuclease PH domain 2-like"/>
    <property type="match status" value="2"/>
</dbReference>
<dbReference type="SUPFAM" id="SSF54211">
    <property type="entry name" value="Ribosomal protein S5 domain 2-like"/>
    <property type="match status" value="2"/>
</dbReference>
<dbReference type="PROSITE" id="PS50084">
    <property type="entry name" value="KH_TYPE_1"/>
    <property type="match status" value="1"/>
</dbReference>
<dbReference type="PROSITE" id="PS50126">
    <property type="entry name" value="S1"/>
    <property type="match status" value="1"/>
</dbReference>
<protein>
    <recommendedName>
        <fullName evidence="1">Polyribonucleotide nucleotidyltransferase</fullName>
        <ecNumber evidence="1">2.7.7.8</ecNumber>
    </recommendedName>
    <alternativeName>
        <fullName evidence="1">Polynucleotide phosphorylase</fullName>
        <shortName evidence="1">PNPase</shortName>
    </alternativeName>
</protein>
<proteinExistence type="inferred from homology"/>
<accession>B8FCZ0</accession>
<reference key="1">
    <citation type="journal article" date="2012" name="Environ. Microbiol.">
        <title>The genome sequence of Desulfatibacillum alkenivorans AK-01: a blueprint for anaerobic alkane oxidation.</title>
        <authorList>
            <person name="Callaghan A.V."/>
            <person name="Morris B.E."/>
            <person name="Pereira I.A."/>
            <person name="McInerney M.J."/>
            <person name="Austin R.N."/>
            <person name="Groves J.T."/>
            <person name="Kukor J.J."/>
            <person name="Suflita J.M."/>
            <person name="Young L.Y."/>
            <person name="Zylstra G.J."/>
            <person name="Wawrik B."/>
        </authorList>
    </citation>
    <scope>NUCLEOTIDE SEQUENCE [LARGE SCALE GENOMIC DNA]</scope>
    <source>
        <strain>AK-01</strain>
    </source>
</reference>
<comment type="function">
    <text evidence="1">Involved in mRNA degradation. Catalyzes the phosphorolysis of single-stranded polyribonucleotides processively in the 3'- to 5'-direction.</text>
</comment>
<comment type="catalytic activity">
    <reaction evidence="1">
        <text>RNA(n+1) + phosphate = RNA(n) + a ribonucleoside 5'-diphosphate</text>
        <dbReference type="Rhea" id="RHEA:22096"/>
        <dbReference type="Rhea" id="RHEA-COMP:14527"/>
        <dbReference type="Rhea" id="RHEA-COMP:17342"/>
        <dbReference type="ChEBI" id="CHEBI:43474"/>
        <dbReference type="ChEBI" id="CHEBI:57930"/>
        <dbReference type="ChEBI" id="CHEBI:140395"/>
        <dbReference type="EC" id="2.7.7.8"/>
    </reaction>
</comment>
<comment type="cofactor">
    <cofactor evidence="1">
        <name>Mg(2+)</name>
        <dbReference type="ChEBI" id="CHEBI:18420"/>
    </cofactor>
</comment>
<comment type="subcellular location">
    <subcellularLocation>
        <location evidence="1">Cytoplasm</location>
    </subcellularLocation>
</comment>
<comment type="similarity">
    <text evidence="1">Belongs to the polyribonucleotide nucleotidyltransferase family.</text>
</comment>